<protein>
    <recommendedName>
        <fullName>Early E3 9.0 kDa glycoprotein</fullName>
    </recommendedName>
</protein>
<organism>
    <name type="scientific">Human adenovirus B serotype 3</name>
    <name type="common">HAdV-3</name>
    <name type="synonym">Human adenovirus 3</name>
    <dbReference type="NCBI Taxonomy" id="45659"/>
    <lineage>
        <taxon>Viruses</taxon>
        <taxon>Varidnaviria</taxon>
        <taxon>Bamfordvirae</taxon>
        <taxon>Preplasmiviricota</taxon>
        <taxon>Tectiliviricetes</taxon>
        <taxon>Rowavirales</taxon>
        <taxon>Adenoviridae</taxon>
        <taxon>Mastadenovirus</taxon>
        <taxon>Human mastadenovirus B</taxon>
    </lineage>
</organism>
<sequence>MILFQSNTTTSYAYTNIQPKYAMQLEITILIVIGILILSVILYFIFCRQIPNVHRNSKRRPIYSPMISRPHMALNEI</sequence>
<name>E311_ADE03</name>
<reference key="1">
    <citation type="journal article" date="1986" name="Gene">
        <title>Region E3 of human adenoviruses; differences between the oncogenic adenovirus-3 and the non-oncogenic adenovirus-2.</title>
        <authorList>
            <person name="Signaes C."/>
            <person name="Akusjaervi G."/>
            <person name="Pettersson U."/>
        </authorList>
    </citation>
    <scope>NUCLEOTIDE SEQUENCE [GENOMIC DNA]</scope>
</reference>
<keyword id="KW-0244">Early protein</keyword>
<keyword id="KW-0325">Glycoprotein</keyword>
<keyword id="KW-1043">Host membrane</keyword>
<keyword id="KW-1048">Host nucleus</keyword>
<keyword id="KW-0472">Membrane</keyword>
<keyword id="KW-0812">Transmembrane</keyword>
<keyword id="KW-1133">Transmembrane helix</keyword>
<comment type="subcellular location">
    <subcellularLocation>
        <location evidence="1">Host nucleus membrane</location>
        <topology evidence="1">Single-pass membrane protein</topology>
    </subcellularLocation>
</comment>
<comment type="similarity">
    <text evidence="3">Belongs to the adenoviridae E3A-1 family.</text>
</comment>
<evidence type="ECO:0000250" key="1"/>
<evidence type="ECO:0000255" key="2"/>
<evidence type="ECO:0000305" key="3"/>
<organismHost>
    <name type="scientific">Homo sapiens</name>
    <name type="common">Human</name>
    <dbReference type="NCBI Taxonomy" id="9606"/>
</organismHost>
<feature type="chain" id="PRO_0000221739" description="Early E3 9.0 kDa glycoprotein">
    <location>
        <begin position="1"/>
        <end position="77"/>
    </location>
</feature>
<feature type="transmembrane region" description="Helical" evidence="2">
    <location>
        <begin position="27"/>
        <end position="47"/>
    </location>
</feature>
<feature type="glycosylation site" description="N-linked (GlcNAc...) asparagine; by host" evidence="2">
    <location>
        <position position="7"/>
    </location>
</feature>
<dbReference type="EMBL" id="M15952">
    <property type="protein sequence ID" value="AAA42486.1"/>
    <property type="molecule type" value="Genomic_DNA"/>
</dbReference>
<dbReference type="PIR" id="G29500">
    <property type="entry name" value="ERAD26"/>
</dbReference>
<dbReference type="SMR" id="P11317"/>
<dbReference type="GO" id="GO:0044200">
    <property type="term" value="C:host cell nuclear membrane"/>
    <property type="evidence" value="ECO:0007669"/>
    <property type="project" value="UniProtKB-SubCell"/>
</dbReference>
<dbReference type="GO" id="GO:0016020">
    <property type="term" value="C:membrane"/>
    <property type="evidence" value="ECO:0007669"/>
    <property type="project" value="UniProtKB-KW"/>
</dbReference>
<accession>P11317</accession>
<proteinExistence type="inferred from homology"/>